<comment type="cofactor">
    <cofactor evidence="1">
        <name>Zn(2+)</name>
        <dbReference type="ChEBI" id="CHEBI:29105"/>
    </cofactor>
    <text evidence="1">Binds 3 Zn(2+) ions per subunit.</text>
</comment>
<comment type="subunit">
    <text evidence="1">Homotrimer.</text>
</comment>
<comment type="similarity">
    <text evidence="1">Belongs to the PHP family.</text>
</comment>
<reference key="1">
    <citation type="journal article" date="2010" name="PLoS Genet.">
        <title>Genome sequence of the plant growth promoting endophytic bacterium Enterobacter sp. 638.</title>
        <authorList>
            <person name="Taghavi S."/>
            <person name="van der Lelie D."/>
            <person name="Hoffman A."/>
            <person name="Zhang Y.B."/>
            <person name="Walla M.D."/>
            <person name="Vangronsveld J."/>
            <person name="Newman L."/>
            <person name="Monchy S."/>
        </authorList>
    </citation>
    <scope>NUCLEOTIDE SEQUENCE [LARGE SCALE GENOMIC DNA]</scope>
    <source>
        <strain>638</strain>
    </source>
</reference>
<evidence type="ECO:0000255" key="1">
    <source>
        <dbReference type="HAMAP-Rule" id="MF_01561"/>
    </source>
</evidence>
<feature type="chain" id="PRO_1000069021" description="Probable phosphatase Ent638_1550">
    <location>
        <begin position="1"/>
        <end position="245"/>
    </location>
</feature>
<feature type="binding site" evidence="1">
    <location>
        <position position="7"/>
    </location>
    <ligand>
        <name>Zn(2+)</name>
        <dbReference type="ChEBI" id="CHEBI:29105"/>
        <label>1</label>
    </ligand>
</feature>
<feature type="binding site" evidence="1">
    <location>
        <position position="9"/>
    </location>
    <ligand>
        <name>Zn(2+)</name>
        <dbReference type="ChEBI" id="CHEBI:29105"/>
        <label>1</label>
    </ligand>
</feature>
<feature type="binding site" evidence="1">
    <location>
        <position position="15"/>
    </location>
    <ligand>
        <name>Zn(2+)</name>
        <dbReference type="ChEBI" id="CHEBI:29105"/>
        <label>2</label>
    </ligand>
</feature>
<feature type="binding site" evidence="1">
    <location>
        <position position="40"/>
    </location>
    <ligand>
        <name>Zn(2+)</name>
        <dbReference type="ChEBI" id="CHEBI:29105"/>
        <label>2</label>
    </ligand>
</feature>
<feature type="binding site" evidence="1">
    <location>
        <position position="73"/>
    </location>
    <ligand>
        <name>Zn(2+)</name>
        <dbReference type="ChEBI" id="CHEBI:29105"/>
        <label>1</label>
    </ligand>
</feature>
<feature type="binding site" evidence="1">
    <location>
        <position position="73"/>
    </location>
    <ligand>
        <name>Zn(2+)</name>
        <dbReference type="ChEBI" id="CHEBI:29105"/>
        <label>3</label>
    </ligand>
</feature>
<feature type="binding site" evidence="1">
    <location>
        <position position="101"/>
    </location>
    <ligand>
        <name>Zn(2+)</name>
        <dbReference type="ChEBI" id="CHEBI:29105"/>
        <label>3</label>
    </ligand>
</feature>
<feature type="binding site" evidence="1">
    <location>
        <position position="131"/>
    </location>
    <ligand>
        <name>Zn(2+)</name>
        <dbReference type="ChEBI" id="CHEBI:29105"/>
        <label>3</label>
    </ligand>
</feature>
<feature type="binding site" evidence="1">
    <location>
        <position position="192"/>
    </location>
    <ligand>
        <name>Zn(2+)</name>
        <dbReference type="ChEBI" id="CHEBI:29105"/>
        <label>1</label>
    </ligand>
</feature>
<feature type="binding site" evidence="1">
    <location>
        <position position="194"/>
    </location>
    <ligand>
        <name>Zn(2+)</name>
        <dbReference type="ChEBI" id="CHEBI:29105"/>
        <label>2</label>
    </ligand>
</feature>
<keyword id="KW-0378">Hydrolase</keyword>
<keyword id="KW-0479">Metal-binding</keyword>
<keyword id="KW-0862">Zinc</keyword>
<proteinExistence type="inferred from homology"/>
<name>Y1550_ENT38</name>
<dbReference type="EC" id="3.1.3.-" evidence="1"/>
<dbReference type="EMBL" id="CP000653">
    <property type="protein sequence ID" value="ABP60229.1"/>
    <property type="molecule type" value="Genomic_DNA"/>
</dbReference>
<dbReference type="RefSeq" id="WP_012016946.1">
    <property type="nucleotide sequence ID" value="NC_009436.1"/>
</dbReference>
<dbReference type="SMR" id="A4W949"/>
<dbReference type="STRING" id="399742.Ent638_1550"/>
<dbReference type="KEGG" id="ent:Ent638_1550"/>
<dbReference type="eggNOG" id="COG1387">
    <property type="taxonomic scope" value="Bacteria"/>
</dbReference>
<dbReference type="HOGENOM" id="CLU_061999_0_1_6"/>
<dbReference type="OrthoDB" id="9808747at2"/>
<dbReference type="Proteomes" id="UP000000230">
    <property type="component" value="Chromosome"/>
</dbReference>
<dbReference type="GO" id="GO:0005829">
    <property type="term" value="C:cytosol"/>
    <property type="evidence" value="ECO:0007669"/>
    <property type="project" value="TreeGrafter"/>
</dbReference>
<dbReference type="GO" id="GO:0016791">
    <property type="term" value="F:phosphatase activity"/>
    <property type="evidence" value="ECO:0007669"/>
    <property type="project" value="UniProtKB-UniRule"/>
</dbReference>
<dbReference type="GO" id="GO:0008270">
    <property type="term" value="F:zinc ion binding"/>
    <property type="evidence" value="ECO:0007669"/>
    <property type="project" value="UniProtKB-UniRule"/>
</dbReference>
<dbReference type="GO" id="GO:0071978">
    <property type="term" value="P:bacterial-type flagellum-dependent swarming motility"/>
    <property type="evidence" value="ECO:0007669"/>
    <property type="project" value="TreeGrafter"/>
</dbReference>
<dbReference type="CDD" id="cd07437">
    <property type="entry name" value="PHP_HisPPase_Ycdx_like"/>
    <property type="match status" value="1"/>
</dbReference>
<dbReference type="FunFam" id="3.20.20.140:FF:000008">
    <property type="entry name" value="Probable phosphatase YcdX"/>
    <property type="match status" value="1"/>
</dbReference>
<dbReference type="Gene3D" id="3.20.20.140">
    <property type="entry name" value="Metal-dependent hydrolases"/>
    <property type="match status" value="1"/>
</dbReference>
<dbReference type="HAMAP" id="MF_01561">
    <property type="entry name" value="YcdX_phosphat"/>
    <property type="match status" value="1"/>
</dbReference>
<dbReference type="InterPro" id="IPR023710">
    <property type="entry name" value="Phosphatase_YcdX_put"/>
</dbReference>
<dbReference type="InterPro" id="IPR004013">
    <property type="entry name" value="PHP_dom"/>
</dbReference>
<dbReference type="InterPro" id="IPR050243">
    <property type="entry name" value="PHP_phosphatase"/>
</dbReference>
<dbReference type="InterPro" id="IPR003141">
    <property type="entry name" value="Pol/His_phosphatase_N"/>
</dbReference>
<dbReference type="InterPro" id="IPR016195">
    <property type="entry name" value="Pol/histidinol_Pase-like"/>
</dbReference>
<dbReference type="NCBIfam" id="NF006702">
    <property type="entry name" value="PRK09248.1"/>
    <property type="match status" value="1"/>
</dbReference>
<dbReference type="PANTHER" id="PTHR36928">
    <property type="entry name" value="PHOSPHATASE YCDX-RELATED"/>
    <property type="match status" value="1"/>
</dbReference>
<dbReference type="PANTHER" id="PTHR36928:SF1">
    <property type="entry name" value="PHOSPHATASE YCDX-RELATED"/>
    <property type="match status" value="1"/>
</dbReference>
<dbReference type="Pfam" id="PF02811">
    <property type="entry name" value="PHP"/>
    <property type="match status" value="1"/>
</dbReference>
<dbReference type="SMART" id="SM00481">
    <property type="entry name" value="POLIIIAc"/>
    <property type="match status" value="1"/>
</dbReference>
<dbReference type="SUPFAM" id="SSF89550">
    <property type="entry name" value="PHP domain-like"/>
    <property type="match status" value="1"/>
</dbReference>
<gene>
    <name type="ordered locus">Ent638_1550</name>
</gene>
<protein>
    <recommendedName>
        <fullName evidence="1">Probable phosphatase Ent638_1550</fullName>
        <ecNumber evidence="1">3.1.3.-</ecNumber>
    </recommendedName>
</protein>
<organism>
    <name type="scientific">Enterobacter sp. (strain 638)</name>
    <dbReference type="NCBI Taxonomy" id="399742"/>
    <lineage>
        <taxon>Bacteria</taxon>
        <taxon>Pseudomonadati</taxon>
        <taxon>Pseudomonadota</taxon>
        <taxon>Gammaproteobacteria</taxon>
        <taxon>Enterobacterales</taxon>
        <taxon>Enterobacteriaceae</taxon>
        <taxon>Enterobacter</taxon>
    </lineage>
</organism>
<accession>A4W949</accession>
<sequence>MYPVDLHMHTVASTHAYSTLHDYIAQARLKGIKLFAITDHGPDMADAPHYWHFVNMRIWPRLVDGVGILRGIEANIKNTDGEIDCTGPMLTSLDMIIAGFHEPVFPPQDKDTHTQAMIATIASGNVHIISHPGNPKFPIDIQAVAQAAAKHRVALEINNSSFTHSRMGSEANCRAVAAAVRDAGGMVALGSDSHTAFTLGEFTECRKVLDEVGFPEERILNVTPRRMLDFLESLGMPHIPEFADL</sequence>